<reference key="1">
    <citation type="journal article" date="2001" name="Nature">
        <title>Genome sequence of Yersinia pestis, the causative agent of plague.</title>
        <authorList>
            <person name="Parkhill J."/>
            <person name="Wren B.W."/>
            <person name="Thomson N.R."/>
            <person name="Titball R.W."/>
            <person name="Holden M.T.G."/>
            <person name="Prentice M.B."/>
            <person name="Sebaihia M."/>
            <person name="James K.D."/>
            <person name="Churcher C.M."/>
            <person name="Mungall K.L."/>
            <person name="Baker S."/>
            <person name="Basham D."/>
            <person name="Bentley S.D."/>
            <person name="Brooks K."/>
            <person name="Cerdeno-Tarraga A.-M."/>
            <person name="Chillingworth T."/>
            <person name="Cronin A."/>
            <person name="Davies R.M."/>
            <person name="Davis P."/>
            <person name="Dougan G."/>
            <person name="Feltwell T."/>
            <person name="Hamlin N."/>
            <person name="Holroyd S."/>
            <person name="Jagels K."/>
            <person name="Karlyshev A.V."/>
            <person name="Leather S."/>
            <person name="Moule S."/>
            <person name="Oyston P.C.F."/>
            <person name="Quail M.A."/>
            <person name="Rutherford K.M."/>
            <person name="Simmonds M."/>
            <person name="Skelton J."/>
            <person name="Stevens K."/>
            <person name="Whitehead S."/>
            <person name="Barrell B.G."/>
        </authorList>
    </citation>
    <scope>NUCLEOTIDE SEQUENCE [LARGE SCALE GENOMIC DNA]</scope>
    <source>
        <strain>CO-92 / Biovar Orientalis</strain>
    </source>
</reference>
<reference key="2">
    <citation type="journal article" date="2002" name="J. Bacteriol.">
        <title>Genome sequence of Yersinia pestis KIM.</title>
        <authorList>
            <person name="Deng W."/>
            <person name="Burland V."/>
            <person name="Plunkett G. III"/>
            <person name="Boutin A."/>
            <person name="Mayhew G.F."/>
            <person name="Liss P."/>
            <person name="Perna N.T."/>
            <person name="Rose D.J."/>
            <person name="Mau B."/>
            <person name="Zhou S."/>
            <person name="Schwartz D.C."/>
            <person name="Fetherston J.D."/>
            <person name="Lindler L.E."/>
            <person name="Brubaker R.R."/>
            <person name="Plano G.V."/>
            <person name="Straley S.C."/>
            <person name="McDonough K.A."/>
            <person name="Nilles M.L."/>
            <person name="Matson J.S."/>
            <person name="Blattner F.R."/>
            <person name="Perry R.D."/>
        </authorList>
    </citation>
    <scope>NUCLEOTIDE SEQUENCE [LARGE SCALE GENOMIC DNA]</scope>
    <source>
        <strain>KIM10+ / Biovar Mediaevalis</strain>
    </source>
</reference>
<reference key="3">
    <citation type="journal article" date="2004" name="DNA Res.">
        <title>Complete genome sequence of Yersinia pestis strain 91001, an isolate avirulent to humans.</title>
        <authorList>
            <person name="Song Y."/>
            <person name="Tong Z."/>
            <person name="Wang J."/>
            <person name="Wang L."/>
            <person name="Guo Z."/>
            <person name="Han Y."/>
            <person name="Zhang J."/>
            <person name="Pei D."/>
            <person name="Zhou D."/>
            <person name="Qin H."/>
            <person name="Pang X."/>
            <person name="Han Y."/>
            <person name="Zhai J."/>
            <person name="Li M."/>
            <person name="Cui B."/>
            <person name="Qi Z."/>
            <person name="Jin L."/>
            <person name="Dai R."/>
            <person name="Chen F."/>
            <person name="Li S."/>
            <person name="Ye C."/>
            <person name="Du Z."/>
            <person name="Lin W."/>
            <person name="Wang J."/>
            <person name="Yu J."/>
            <person name="Yang H."/>
            <person name="Wang J."/>
            <person name="Huang P."/>
            <person name="Yang R."/>
        </authorList>
    </citation>
    <scope>NUCLEOTIDE SEQUENCE [LARGE SCALE GENOMIC DNA]</scope>
    <source>
        <strain>91001 / Biovar Mediaevalis</strain>
    </source>
</reference>
<evidence type="ECO:0000255" key="1">
    <source>
        <dbReference type="HAMAP-Rule" id="MF_00649"/>
    </source>
</evidence>
<evidence type="ECO:0000256" key="2">
    <source>
        <dbReference type="SAM" id="MobiDB-lite"/>
    </source>
</evidence>
<gene>
    <name evidence="1" type="primary">yacG</name>
    <name type="ordered locus">YPO3432</name>
    <name type="ordered locus">y0755</name>
    <name type="ordered locus">YP_0252</name>
</gene>
<comment type="function">
    <text evidence="1">Inhibits all the catalytic activities of DNA gyrase by preventing its interaction with DNA. Acts by binding directly to the C-terminal domain of GyrB, which probably disrupts DNA binding by the gyrase.</text>
</comment>
<comment type="cofactor">
    <cofactor evidence="1">
        <name>Zn(2+)</name>
        <dbReference type="ChEBI" id="CHEBI:29105"/>
    </cofactor>
    <text evidence="1">Binds 1 zinc ion.</text>
</comment>
<comment type="subunit">
    <text evidence="1">Interacts with GyrB.</text>
</comment>
<comment type="similarity">
    <text evidence="1">Belongs to the DNA gyrase inhibitor YacG family.</text>
</comment>
<keyword id="KW-0479">Metal-binding</keyword>
<keyword id="KW-1185">Reference proteome</keyword>
<keyword id="KW-0862">Zinc</keyword>
<sequence>MESEQIQVNCPTCGKVVIWGEQSPFRPFCCKRCQLIDLGEWADEEKRIPSDTELSDSDEWSEEDPLKH</sequence>
<protein>
    <recommendedName>
        <fullName evidence="1">DNA gyrase inhibitor YacG</fullName>
    </recommendedName>
</protein>
<name>YACG_YERPE</name>
<feature type="chain" id="PRO_0000211734" description="DNA gyrase inhibitor YacG">
    <location>
        <begin position="1"/>
        <end position="68"/>
    </location>
</feature>
<feature type="region of interest" description="Disordered" evidence="2">
    <location>
        <begin position="45"/>
        <end position="68"/>
    </location>
</feature>
<feature type="compositionally biased region" description="Acidic residues" evidence="2">
    <location>
        <begin position="53"/>
        <end position="68"/>
    </location>
</feature>
<feature type="binding site" evidence="1">
    <location>
        <position position="10"/>
    </location>
    <ligand>
        <name>Zn(2+)</name>
        <dbReference type="ChEBI" id="CHEBI:29105"/>
    </ligand>
</feature>
<feature type="binding site" evidence="1">
    <location>
        <position position="13"/>
    </location>
    <ligand>
        <name>Zn(2+)</name>
        <dbReference type="ChEBI" id="CHEBI:29105"/>
    </ligand>
</feature>
<feature type="binding site" evidence="1">
    <location>
        <position position="29"/>
    </location>
    <ligand>
        <name>Zn(2+)</name>
        <dbReference type="ChEBI" id="CHEBI:29105"/>
    </ligand>
</feature>
<feature type="binding site" evidence="1">
    <location>
        <position position="33"/>
    </location>
    <ligand>
        <name>Zn(2+)</name>
        <dbReference type="ChEBI" id="CHEBI:29105"/>
    </ligand>
</feature>
<dbReference type="EMBL" id="AL590842">
    <property type="protein sequence ID" value="CAL22021.1"/>
    <property type="molecule type" value="Genomic_DNA"/>
</dbReference>
<dbReference type="EMBL" id="AE009952">
    <property type="protein sequence ID" value="AAM84342.1"/>
    <property type="molecule type" value="Genomic_DNA"/>
</dbReference>
<dbReference type="EMBL" id="AE017042">
    <property type="protein sequence ID" value="AAS60528.1"/>
    <property type="molecule type" value="Genomic_DNA"/>
</dbReference>
<dbReference type="PIR" id="AB0417">
    <property type="entry name" value="AB0417"/>
</dbReference>
<dbReference type="RefSeq" id="WP_002209317.1">
    <property type="nucleotide sequence ID" value="NZ_WUCM01000091.1"/>
</dbReference>
<dbReference type="RefSeq" id="YP_002348324.1">
    <property type="nucleotide sequence ID" value="NC_003143.1"/>
</dbReference>
<dbReference type="SMR" id="Q8ZBH8"/>
<dbReference type="STRING" id="214092.YPO3432"/>
<dbReference type="PaxDb" id="214092-YPO3432"/>
<dbReference type="DNASU" id="1145702"/>
<dbReference type="EnsemblBacteria" id="AAS60528">
    <property type="protein sequence ID" value="AAS60528"/>
    <property type="gene ID" value="YP_0252"/>
</dbReference>
<dbReference type="GeneID" id="57975278"/>
<dbReference type="KEGG" id="ype:YPO3432"/>
<dbReference type="KEGG" id="ypk:y0755"/>
<dbReference type="KEGG" id="ypm:YP_0252"/>
<dbReference type="PATRIC" id="fig|214092.21.peg.3921"/>
<dbReference type="eggNOG" id="COG3024">
    <property type="taxonomic scope" value="Bacteria"/>
</dbReference>
<dbReference type="HOGENOM" id="CLU_178280_3_1_6"/>
<dbReference type="OMA" id="WAAEEHK"/>
<dbReference type="OrthoDB" id="9809663at2"/>
<dbReference type="Proteomes" id="UP000000815">
    <property type="component" value="Chromosome"/>
</dbReference>
<dbReference type="Proteomes" id="UP000001019">
    <property type="component" value="Chromosome"/>
</dbReference>
<dbReference type="Proteomes" id="UP000002490">
    <property type="component" value="Chromosome"/>
</dbReference>
<dbReference type="GO" id="GO:0008657">
    <property type="term" value="F:DNA topoisomerase type II (double strand cut, ATP-hydrolyzing) inhibitor activity"/>
    <property type="evidence" value="ECO:0000318"/>
    <property type="project" value="GO_Central"/>
</dbReference>
<dbReference type="GO" id="GO:0008270">
    <property type="term" value="F:zinc ion binding"/>
    <property type="evidence" value="ECO:0007669"/>
    <property type="project" value="UniProtKB-UniRule"/>
</dbReference>
<dbReference type="GO" id="GO:0006355">
    <property type="term" value="P:regulation of DNA-templated transcription"/>
    <property type="evidence" value="ECO:0007669"/>
    <property type="project" value="InterPro"/>
</dbReference>
<dbReference type="Gene3D" id="3.30.50.10">
    <property type="entry name" value="Erythroid Transcription Factor GATA-1, subunit A"/>
    <property type="match status" value="1"/>
</dbReference>
<dbReference type="HAMAP" id="MF_00649">
    <property type="entry name" value="DNA_gyrase_inhibitor_YacG"/>
    <property type="match status" value="1"/>
</dbReference>
<dbReference type="InterPro" id="IPR005584">
    <property type="entry name" value="DNA_gyrase_inhibitor_YacG"/>
</dbReference>
<dbReference type="InterPro" id="IPR013088">
    <property type="entry name" value="Znf_NHR/GATA"/>
</dbReference>
<dbReference type="NCBIfam" id="NF001638">
    <property type="entry name" value="PRK00418.1"/>
    <property type="match status" value="1"/>
</dbReference>
<dbReference type="PANTHER" id="PTHR36150">
    <property type="entry name" value="DNA GYRASE INHIBITOR YACG"/>
    <property type="match status" value="1"/>
</dbReference>
<dbReference type="PANTHER" id="PTHR36150:SF1">
    <property type="entry name" value="DNA GYRASE INHIBITOR YACG"/>
    <property type="match status" value="1"/>
</dbReference>
<dbReference type="Pfam" id="PF03884">
    <property type="entry name" value="YacG"/>
    <property type="match status" value="1"/>
</dbReference>
<dbReference type="SUPFAM" id="SSF57716">
    <property type="entry name" value="Glucocorticoid receptor-like (DNA-binding domain)"/>
    <property type="match status" value="1"/>
</dbReference>
<accession>Q8ZBH8</accession>
<accession>Q0WBL4</accession>
<organism>
    <name type="scientific">Yersinia pestis</name>
    <dbReference type="NCBI Taxonomy" id="632"/>
    <lineage>
        <taxon>Bacteria</taxon>
        <taxon>Pseudomonadati</taxon>
        <taxon>Pseudomonadota</taxon>
        <taxon>Gammaproteobacteria</taxon>
        <taxon>Enterobacterales</taxon>
        <taxon>Yersiniaceae</taxon>
        <taxon>Yersinia</taxon>
    </lineage>
</organism>
<proteinExistence type="inferred from homology"/>